<feature type="chain" id="PRO_0000276067" description="Photosystem I reaction center subunit IX">
    <location>
        <begin position="1"/>
        <end position="41"/>
    </location>
</feature>
<feature type="transmembrane region" description="Helical" evidence="1">
    <location>
        <begin position="7"/>
        <end position="27"/>
    </location>
</feature>
<proteinExistence type="inferred from homology"/>
<dbReference type="EMBL" id="DQ291132">
    <property type="protein sequence ID" value="ABB81960.1"/>
    <property type="molecule type" value="Genomic_DNA"/>
</dbReference>
<dbReference type="RefSeq" id="YP_635892.1">
    <property type="nucleotide sequence ID" value="NC_008099.1"/>
</dbReference>
<dbReference type="SMR" id="Q20EV3"/>
<dbReference type="GeneID" id="4100124"/>
<dbReference type="GO" id="GO:0009535">
    <property type="term" value="C:chloroplast thylakoid membrane"/>
    <property type="evidence" value="ECO:0007669"/>
    <property type="project" value="UniProtKB-SubCell"/>
</dbReference>
<dbReference type="GO" id="GO:0009522">
    <property type="term" value="C:photosystem I"/>
    <property type="evidence" value="ECO:0007669"/>
    <property type="project" value="UniProtKB-KW"/>
</dbReference>
<dbReference type="GO" id="GO:0015979">
    <property type="term" value="P:photosynthesis"/>
    <property type="evidence" value="ECO:0007669"/>
    <property type="project" value="UniProtKB-UniRule"/>
</dbReference>
<dbReference type="Gene3D" id="1.20.5.510">
    <property type="entry name" value="Single helix bin"/>
    <property type="match status" value="1"/>
</dbReference>
<dbReference type="HAMAP" id="MF_00522">
    <property type="entry name" value="PSI_PsaJ"/>
    <property type="match status" value="1"/>
</dbReference>
<dbReference type="InterPro" id="IPR002615">
    <property type="entry name" value="PSI_PsaJ"/>
</dbReference>
<dbReference type="InterPro" id="IPR036062">
    <property type="entry name" value="PSI_PsaJ_sf"/>
</dbReference>
<dbReference type="PANTHER" id="PTHR36082">
    <property type="match status" value="1"/>
</dbReference>
<dbReference type="PANTHER" id="PTHR36082:SF2">
    <property type="entry name" value="PHOTOSYSTEM I REACTION CENTER SUBUNIT IX"/>
    <property type="match status" value="1"/>
</dbReference>
<dbReference type="Pfam" id="PF01701">
    <property type="entry name" value="PSI_PsaJ"/>
    <property type="match status" value="1"/>
</dbReference>
<dbReference type="SUPFAM" id="SSF81544">
    <property type="entry name" value="Subunit IX of photosystem I reaction centre, PsaJ"/>
    <property type="match status" value="1"/>
</dbReference>
<keyword id="KW-0150">Chloroplast</keyword>
<keyword id="KW-0472">Membrane</keyword>
<keyword id="KW-0602">Photosynthesis</keyword>
<keyword id="KW-0603">Photosystem I</keyword>
<keyword id="KW-0934">Plastid</keyword>
<keyword id="KW-0793">Thylakoid</keyword>
<keyword id="KW-0812">Transmembrane</keyword>
<keyword id="KW-1133">Transmembrane helix</keyword>
<name>PSAJ_OLTVI</name>
<geneLocation type="chloroplast"/>
<organism>
    <name type="scientific">Oltmannsiellopsis viridis</name>
    <name type="common">Marine flagellate</name>
    <name type="synonym">Oltmannsiella viridis</name>
    <dbReference type="NCBI Taxonomy" id="51324"/>
    <lineage>
        <taxon>Eukaryota</taxon>
        <taxon>Viridiplantae</taxon>
        <taxon>Chlorophyta</taxon>
        <taxon>Ulvophyceae</taxon>
        <taxon>Oltmannsiellopsidales</taxon>
        <taxon>Oltmannsiellopsidaceae</taxon>
        <taxon>Oltmannsiellopsis</taxon>
    </lineage>
</organism>
<evidence type="ECO:0000255" key="1">
    <source>
        <dbReference type="HAMAP-Rule" id="MF_00522"/>
    </source>
</evidence>
<gene>
    <name evidence="1" type="primary">psaJ</name>
</gene>
<sequence length="41" mass="4618">MKDFTTYLSTAPVVAAAWFTFTAGLLIEINRFFPDPLAFSF</sequence>
<accession>Q20EV3</accession>
<comment type="function">
    <text evidence="1">May help in the organization of the PsaE and PsaF subunits.</text>
</comment>
<comment type="subcellular location">
    <subcellularLocation>
        <location evidence="1">Plastid</location>
        <location evidence="1">Chloroplast thylakoid membrane</location>
        <topology evidence="1">Single-pass membrane protein</topology>
    </subcellularLocation>
</comment>
<comment type="similarity">
    <text evidence="1">Belongs to the PsaJ family.</text>
</comment>
<reference key="1">
    <citation type="journal article" date="2006" name="BMC Biol.">
        <title>The complete chloroplast DNA sequence of the green alga Oltmannsiellopsis viridis reveals a distinctive quadripartite architecture in the chloroplast genome of early diverging ulvophytes.</title>
        <authorList>
            <person name="Pombert J.-F."/>
            <person name="Lemieux C."/>
            <person name="Turmel M."/>
        </authorList>
    </citation>
    <scope>NUCLEOTIDE SEQUENCE [LARGE SCALE GENOMIC DNA]</scope>
</reference>
<protein>
    <recommendedName>
        <fullName evidence="1">Photosystem I reaction center subunit IX</fullName>
    </recommendedName>
    <alternativeName>
        <fullName evidence="1">PSI-J</fullName>
    </alternativeName>
</protein>